<keyword id="KW-0030">Aminoacyl-tRNA synthetase</keyword>
<keyword id="KW-0067">ATP-binding</keyword>
<keyword id="KW-0436">Ligase</keyword>
<keyword id="KW-0479">Metal-binding</keyword>
<keyword id="KW-0547">Nucleotide-binding</keyword>
<keyword id="KW-1185">Reference proteome</keyword>
<keyword id="KW-0862">Zinc</keyword>
<organism>
    <name type="scientific">Corynebacterium efficiens (strain DSM 44549 / YS-314 / AJ 12310 / JCM 11189 / NBRC 100395)</name>
    <dbReference type="NCBI Taxonomy" id="196164"/>
    <lineage>
        <taxon>Bacteria</taxon>
        <taxon>Bacillati</taxon>
        <taxon>Actinomycetota</taxon>
        <taxon>Actinomycetes</taxon>
        <taxon>Mycobacteriales</taxon>
        <taxon>Corynebacteriaceae</taxon>
        <taxon>Corynebacterium</taxon>
    </lineage>
</organism>
<feature type="chain" id="PRO_0000208295" description="Glutamyl-Q tRNA(Asp) synthetase">
    <location>
        <begin position="1"/>
        <end position="306"/>
    </location>
</feature>
<feature type="short sequence motif" description="'HIGH' region">
    <location>
        <begin position="7"/>
        <end position="17"/>
    </location>
</feature>
<feature type="short sequence motif" description="'KMSKS' region">
    <location>
        <begin position="236"/>
        <end position="240"/>
    </location>
</feature>
<feature type="binding site" evidence="1">
    <location>
        <begin position="4"/>
        <end position="8"/>
    </location>
    <ligand>
        <name>L-glutamate</name>
        <dbReference type="ChEBI" id="CHEBI:29985"/>
    </ligand>
</feature>
<feature type="binding site" evidence="1">
    <location>
        <position position="40"/>
    </location>
    <ligand>
        <name>L-glutamate</name>
        <dbReference type="ChEBI" id="CHEBI:29985"/>
    </ligand>
</feature>
<feature type="binding site" evidence="1">
    <location>
        <position position="92"/>
    </location>
    <ligand>
        <name>Zn(2+)</name>
        <dbReference type="ChEBI" id="CHEBI:29105"/>
    </ligand>
</feature>
<feature type="binding site" evidence="1">
    <location>
        <position position="94"/>
    </location>
    <ligand>
        <name>Zn(2+)</name>
        <dbReference type="ChEBI" id="CHEBI:29105"/>
    </ligand>
</feature>
<feature type="binding site" evidence="1">
    <location>
        <position position="113"/>
    </location>
    <ligand>
        <name>Zn(2+)</name>
        <dbReference type="ChEBI" id="CHEBI:29105"/>
    </ligand>
</feature>
<feature type="binding site" evidence="1">
    <location>
        <position position="117"/>
    </location>
    <ligand>
        <name>Zn(2+)</name>
        <dbReference type="ChEBI" id="CHEBI:29105"/>
    </ligand>
</feature>
<feature type="binding site" evidence="1">
    <location>
        <position position="180"/>
    </location>
    <ligand>
        <name>L-glutamate</name>
        <dbReference type="ChEBI" id="CHEBI:29985"/>
    </ligand>
</feature>
<feature type="binding site" evidence="1">
    <location>
        <position position="198"/>
    </location>
    <ligand>
        <name>L-glutamate</name>
        <dbReference type="ChEBI" id="CHEBI:29985"/>
    </ligand>
</feature>
<feature type="binding site" evidence="1">
    <location>
        <position position="239"/>
    </location>
    <ligand>
        <name>ATP</name>
        <dbReference type="ChEBI" id="CHEBI:30616"/>
    </ligand>
</feature>
<accession>Q8FU18</accession>
<sequence>MAGRYAPSPSGDLHFGNLRTALLAWVFARHDGRDFLMRVEDIDEQRSTMESAERQLSDLSMLGLDWDGDVLYQSSRHDAYRAAIAQLDTYECYCSRRDIQEASRAPHAKPGMYPGTCRELTPGQRAERRAGLAAQNRHPAIRLRAEVDSFTVVDRLRGEVTGDVDDFILLRGGQEPGWAYNLAVVVDDAFQGVDQVVRGDDLLDSVARQAYLCTLLGAAIPEYVHVPLVLNARGQRLAKRDGAVTLREMLVDAPLTHIISSLAASLGYEGISTPVELLAVFDPGALSLEPFIFTGLNGSATDRMDK</sequence>
<dbReference type="EC" id="6.1.1.-" evidence="1"/>
<dbReference type="EMBL" id="BA000035">
    <property type="protein sequence ID" value="BAC17013.1"/>
    <property type="molecule type" value="Genomic_DNA"/>
</dbReference>
<dbReference type="RefSeq" id="WP_006768486.1">
    <property type="nucleotide sequence ID" value="NC_004369.1"/>
</dbReference>
<dbReference type="SMR" id="Q8FU18"/>
<dbReference type="STRING" id="196164.gene:10740598"/>
<dbReference type="KEGG" id="cef:CE0203"/>
<dbReference type="eggNOG" id="COG0008">
    <property type="taxonomic scope" value="Bacteria"/>
</dbReference>
<dbReference type="HOGENOM" id="CLU_015768_0_0_11"/>
<dbReference type="OrthoDB" id="9807503at2"/>
<dbReference type="Proteomes" id="UP000001409">
    <property type="component" value="Chromosome"/>
</dbReference>
<dbReference type="GO" id="GO:0005829">
    <property type="term" value="C:cytosol"/>
    <property type="evidence" value="ECO:0007669"/>
    <property type="project" value="TreeGrafter"/>
</dbReference>
<dbReference type="GO" id="GO:0005524">
    <property type="term" value="F:ATP binding"/>
    <property type="evidence" value="ECO:0007669"/>
    <property type="project" value="UniProtKB-KW"/>
</dbReference>
<dbReference type="GO" id="GO:0004818">
    <property type="term" value="F:glutamate-tRNA ligase activity"/>
    <property type="evidence" value="ECO:0007669"/>
    <property type="project" value="TreeGrafter"/>
</dbReference>
<dbReference type="GO" id="GO:0008270">
    <property type="term" value="F:zinc ion binding"/>
    <property type="evidence" value="ECO:0007669"/>
    <property type="project" value="UniProtKB-UniRule"/>
</dbReference>
<dbReference type="GO" id="GO:0006424">
    <property type="term" value="P:glutamyl-tRNA aminoacylation"/>
    <property type="evidence" value="ECO:0007669"/>
    <property type="project" value="InterPro"/>
</dbReference>
<dbReference type="GO" id="GO:0006400">
    <property type="term" value="P:tRNA modification"/>
    <property type="evidence" value="ECO:0007669"/>
    <property type="project" value="InterPro"/>
</dbReference>
<dbReference type="Gene3D" id="3.40.50.620">
    <property type="entry name" value="HUPs"/>
    <property type="match status" value="1"/>
</dbReference>
<dbReference type="HAMAP" id="MF_01428">
    <property type="entry name" value="Glu_Q_tRNA_synth"/>
    <property type="match status" value="1"/>
</dbReference>
<dbReference type="InterPro" id="IPR022380">
    <property type="entry name" value="Glu-Q_tRNA(Asp)_Synthase"/>
</dbReference>
<dbReference type="InterPro" id="IPR000924">
    <property type="entry name" value="Glu/Gln-tRNA-synth"/>
</dbReference>
<dbReference type="InterPro" id="IPR020058">
    <property type="entry name" value="Glu/Gln-tRNA-synth_Ib_cat-dom"/>
</dbReference>
<dbReference type="InterPro" id="IPR049940">
    <property type="entry name" value="GluQ/Sye"/>
</dbReference>
<dbReference type="InterPro" id="IPR014729">
    <property type="entry name" value="Rossmann-like_a/b/a_fold"/>
</dbReference>
<dbReference type="NCBIfam" id="NF004314">
    <property type="entry name" value="PRK05710.1-3"/>
    <property type="match status" value="1"/>
</dbReference>
<dbReference type="NCBIfam" id="NF004315">
    <property type="entry name" value="PRK05710.1-4"/>
    <property type="match status" value="1"/>
</dbReference>
<dbReference type="NCBIfam" id="TIGR03838">
    <property type="entry name" value="queuosine_YadB"/>
    <property type="match status" value="1"/>
</dbReference>
<dbReference type="PANTHER" id="PTHR43311">
    <property type="entry name" value="GLUTAMATE--TRNA LIGASE"/>
    <property type="match status" value="1"/>
</dbReference>
<dbReference type="PANTHER" id="PTHR43311:SF1">
    <property type="entry name" value="GLUTAMYL-Q TRNA(ASP) SYNTHETASE"/>
    <property type="match status" value="1"/>
</dbReference>
<dbReference type="Pfam" id="PF00749">
    <property type="entry name" value="tRNA-synt_1c"/>
    <property type="match status" value="1"/>
</dbReference>
<dbReference type="PRINTS" id="PR00987">
    <property type="entry name" value="TRNASYNTHGLU"/>
</dbReference>
<dbReference type="SUPFAM" id="SSF52374">
    <property type="entry name" value="Nucleotidylyl transferase"/>
    <property type="match status" value="1"/>
</dbReference>
<comment type="function">
    <text evidence="1">Catalyzes the tRNA-independent activation of glutamate in presence of ATP and the subsequent transfer of glutamate onto a tRNA(Asp). Glutamate is transferred on the 2-amino-5-(4,5-dihydroxy-2-cyclopenten-1-yl) moiety of the queuosine in the wobble position of the QUC anticodon.</text>
</comment>
<comment type="cofactor">
    <cofactor evidence="1">
        <name>Zn(2+)</name>
        <dbReference type="ChEBI" id="CHEBI:29105"/>
    </cofactor>
    <text evidence="1">Binds 1 zinc ion per subunit.</text>
</comment>
<comment type="similarity">
    <text evidence="1">Belongs to the class-I aminoacyl-tRNA synthetase family. GluQ subfamily.</text>
</comment>
<reference key="1">
    <citation type="journal article" date="2003" name="Genome Res.">
        <title>Comparative complete genome sequence analysis of the amino acid replacements responsible for the thermostability of Corynebacterium efficiens.</title>
        <authorList>
            <person name="Nishio Y."/>
            <person name="Nakamura Y."/>
            <person name="Kawarabayasi Y."/>
            <person name="Usuda Y."/>
            <person name="Kimura E."/>
            <person name="Sugimoto S."/>
            <person name="Matsui K."/>
            <person name="Yamagishi A."/>
            <person name="Kikuchi H."/>
            <person name="Ikeo K."/>
            <person name="Gojobori T."/>
        </authorList>
    </citation>
    <scope>NUCLEOTIDE SEQUENCE [LARGE SCALE GENOMIC DNA]</scope>
    <source>
        <strain>DSM 44549 / YS-314 / AJ 12310 / JCM 11189 / NBRC 100395</strain>
    </source>
</reference>
<proteinExistence type="inferred from homology"/>
<protein>
    <recommendedName>
        <fullName evidence="1">Glutamyl-Q tRNA(Asp) synthetase</fullName>
        <shortName evidence="1">Glu-Q-RSs</shortName>
        <ecNumber evidence="1">6.1.1.-</ecNumber>
    </recommendedName>
</protein>
<name>GLUQ_COREF</name>
<gene>
    <name evidence="1" type="primary">gluQ</name>
    <name type="ordered locus">CE0203</name>
</gene>
<evidence type="ECO:0000255" key="1">
    <source>
        <dbReference type="HAMAP-Rule" id="MF_01428"/>
    </source>
</evidence>